<accession>Q01517</accession>
<evidence type="ECO:0000250" key="1"/>
<evidence type="ECO:0000305" key="2"/>
<keyword id="KW-0150">Chloroplast</keyword>
<keyword id="KW-0903">Direct protein sequencing</keyword>
<keyword id="KW-0324">Glycolysis</keyword>
<keyword id="KW-0456">Lyase</keyword>
<keyword id="KW-0934">Plastid</keyword>
<keyword id="KW-0704">Schiff base</keyword>
<dbReference type="EC" id="4.1.2.13"/>
<dbReference type="EMBL" id="M97477">
    <property type="protein sequence ID" value="AAA33643.1"/>
    <property type="molecule type" value="Genomic_DNA"/>
</dbReference>
<dbReference type="PIR" id="S29048">
    <property type="entry name" value="S29048"/>
</dbReference>
<dbReference type="SMR" id="Q01517"/>
<dbReference type="SABIO-RK" id="Q01517"/>
<dbReference type="UniPathway" id="UPA00109">
    <property type="reaction ID" value="UER00183"/>
</dbReference>
<dbReference type="GO" id="GO:0009507">
    <property type="term" value="C:chloroplast"/>
    <property type="evidence" value="ECO:0007669"/>
    <property type="project" value="UniProtKB-SubCell"/>
</dbReference>
<dbReference type="GO" id="GO:0004332">
    <property type="term" value="F:fructose-bisphosphate aldolase activity"/>
    <property type="evidence" value="ECO:0007669"/>
    <property type="project" value="UniProtKB-EC"/>
</dbReference>
<dbReference type="GO" id="GO:0006096">
    <property type="term" value="P:glycolytic process"/>
    <property type="evidence" value="ECO:0007669"/>
    <property type="project" value="UniProtKB-UniPathway"/>
</dbReference>
<dbReference type="CDD" id="cd00948">
    <property type="entry name" value="FBP_aldolase_I_a"/>
    <property type="match status" value="1"/>
</dbReference>
<dbReference type="FunFam" id="3.20.20.70:FF:000052">
    <property type="entry name" value="Fructose-bisphosphate aldolase"/>
    <property type="match status" value="1"/>
</dbReference>
<dbReference type="Gene3D" id="3.20.20.70">
    <property type="entry name" value="Aldolase class I"/>
    <property type="match status" value="1"/>
</dbReference>
<dbReference type="InterPro" id="IPR029768">
    <property type="entry name" value="Aldolase_I_AS"/>
</dbReference>
<dbReference type="InterPro" id="IPR013785">
    <property type="entry name" value="Aldolase_TIM"/>
</dbReference>
<dbReference type="InterPro" id="IPR000741">
    <property type="entry name" value="FBA_I"/>
</dbReference>
<dbReference type="NCBIfam" id="NF033379">
    <property type="entry name" value="FrucBisAld_I"/>
    <property type="match status" value="1"/>
</dbReference>
<dbReference type="PANTHER" id="PTHR11627">
    <property type="entry name" value="FRUCTOSE-BISPHOSPHATE ALDOLASE"/>
    <property type="match status" value="1"/>
</dbReference>
<dbReference type="Pfam" id="PF00274">
    <property type="entry name" value="Glycolytic"/>
    <property type="match status" value="1"/>
</dbReference>
<dbReference type="SUPFAM" id="SSF51569">
    <property type="entry name" value="Aldolase"/>
    <property type="match status" value="1"/>
</dbReference>
<dbReference type="PROSITE" id="PS00158">
    <property type="entry name" value="ALDOLASE_CLASS_I"/>
    <property type="match status" value="1"/>
</dbReference>
<proteinExistence type="evidence at protein level"/>
<comment type="catalytic activity">
    <reaction>
        <text>beta-D-fructose 1,6-bisphosphate = D-glyceraldehyde 3-phosphate + dihydroxyacetone phosphate</text>
        <dbReference type="Rhea" id="RHEA:14729"/>
        <dbReference type="ChEBI" id="CHEBI:32966"/>
        <dbReference type="ChEBI" id="CHEBI:57642"/>
        <dbReference type="ChEBI" id="CHEBI:59776"/>
        <dbReference type="EC" id="4.1.2.13"/>
    </reaction>
</comment>
<comment type="pathway">
    <text>Carbohydrate degradation; glycolysis; D-glyceraldehyde 3-phosphate and glycerone phosphate from D-glucose: step 4/4.</text>
</comment>
<comment type="subcellular location">
    <subcellularLocation>
        <location>Plastid</location>
        <location>Chloroplast</location>
    </subcellularLocation>
</comment>
<comment type="similarity">
    <text evidence="2">Belongs to the class I fructose-bisphosphate aldolase family.</text>
</comment>
<organism>
    <name type="scientific">Pisum sativum</name>
    <name type="common">Garden pea</name>
    <name type="synonym">Lathyrus oleraceus</name>
    <dbReference type="NCBI Taxonomy" id="3888"/>
    <lineage>
        <taxon>Eukaryota</taxon>
        <taxon>Viridiplantae</taxon>
        <taxon>Streptophyta</taxon>
        <taxon>Embryophyta</taxon>
        <taxon>Tracheophyta</taxon>
        <taxon>Spermatophyta</taxon>
        <taxon>Magnoliopsida</taxon>
        <taxon>eudicotyledons</taxon>
        <taxon>Gunneridae</taxon>
        <taxon>Pentapetalae</taxon>
        <taxon>rosids</taxon>
        <taxon>fabids</taxon>
        <taxon>Fabales</taxon>
        <taxon>Fabaceae</taxon>
        <taxon>Papilionoideae</taxon>
        <taxon>50 kb inversion clade</taxon>
        <taxon>NPAAA clade</taxon>
        <taxon>Hologalegina</taxon>
        <taxon>IRL clade</taxon>
        <taxon>Fabeae</taxon>
        <taxon>Pisum</taxon>
    </lineage>
</organism>
<feature type="chain" id="PRO_0000216926" description="Fructose-bisphosphate aldolase 2, chloroplastic">
    <location>
        <begin position="1"/>
        <end position="349"/>
    </location>
</feature>
<feature type="active site" description="Proton acceptor" evidence="1">
    <location>
        <position position="177"/>
    </location>
</feature>
<feature type="active site" description="Schiff-base intermediate with dihydroxyacetone-P" evidence="1">
    <location>
        <position position="219"/>
    </location>
</feature>
<feature type="binding site" evidence="1">
    <location>
        <position position="47"/>
    </location>
    <ligand>
        <name>substrate</name>
    </ligand>
</feature>
<feature type="binding site" evidence="1">
    <location>
        <position position="137"/>
    </location>
    <ligand>
        <name>substrate</name>
    </ligand>
</feature>
<feature type="site" description="Necessary for preference for fructose 1,6-bisphosphate over fructose 1-phosphate" evidence="1">
    <location>
        <position position="349"/>
    </location>
</feature>
<feature type="sequence variant" description="In strain: cv. Little Marvel.">
    <original>A</original>
    <variation>W</variation>
    <location>
        <position position="29"/>
    </location>
</feature>
<sequence length="349" mass="37827">GSYADELVKTAKTIASPGRGILAMDESNATCGKRLDSIGLENTEANRQAWRTLLVTVPTLGEYISGAILFEETLYQSTVDGRKIVDVLVEQNIIPGIKVDKGLVPLAGSNNESWCQGLDGLASRSAAYYQQGARFAKWRTVVSIPNGPSALAVKEAAWGLARYAAISQDNGLVPIVEPEILLDGEHGIDRTFEVAQKVWAEVFYYLAENNVQFEGILLKPSMVTPGAESKDKASPTKVAEYTLNLLHRRIPPAVPGIMFLSGGQSEVEATLNLNAMNKSPNPWHVSFSYARALQNTALKTWGGLPENVKAAQEALLFRAKSNSLAQLGKYIGDGESEEAKKDCCQGYSY</sequence>
<reference key="1">
    <citation type="journal article" date="1992" name="Arch. Biochem. Biophys.">
        <title>Chloroplast and cytoplasmic enzymes: isolation and sequencing of cDNAs coding for two distinct pea chloroplast aldolases.</title>
        <authorList>
            <person name="Razdan K."/>
            <person name="Heinrikson R.L."/>
            <person name="Zurcher-Neely H."/>
            <person name="Morris P.W."/>
            <person name="Anderson L.E."/>
        </authorList>
    </citation>
    <scope>NUCLEOTIDE SEQUENCE [GENOMIC DNA] OF 2-349</scope>
    <scope>PROTEIN SEQUENCE OF 1-32</scope>
    <source>
        <strain>cv. Little Marvel</strain>
        <strain>cv. Sparkle</strain>
        <tissue>Leaf</tissue>
    </source>
</reference>
<protein>
    <recommendedName>
        <fullName>Fructose-bisphosphate aldolase 2, chloroplastic</fullName>
        <ecNumber>4.1.2.13</ecNumber>
    </recommendedName>
</protein>
<name>ALFC2_PEA</name>